<proteinExistence type="evidence at protein level"/>
<keyword id="KW-0121">Carboxypeptidase</keyword>
<keyword id="KW-1003">Cell membrane</keyword>
<keyword id="KW-0133">Cell shape</keyword>
<keyword id="KW-0961">Cell wall biogenesis/degradation</keyword>
<keyword id="KW-0378">Hydrolase</keyword>
<keyword id="KW-0472">Membrane</keyword>
<keyword id="KW-0573">Peptidoglycan synthesis</keyword>
<keyword id="KW-0645">Protease</keyword>
<keyword id="KW-1185">Reference proteome</keyword>
<keyword id="KW-0749">Sporulation</keyword>
<comment type="function">
    <text evidence="3">Penicillin-binding protein with an unknown catalytic activity. May have a specialized role in the morphogenesis of spore cortex, which is a modified form of peptidoglycan. Spore cortex formation is determined primarily by the mother cell.</text>
</comment>
<comment type="catalytic activity">
    <reaction evidence="4">
        <text>Preferential cleavage: (Ac)2-L-Lys-D-Ala-|-D-Ala. Also transpeptidation of peptidyl-alanyl moieties that are N-acyl substituents of D-alanine.</text>
        <dbReference type="EC" id="3.4.16.4"/>
    </reaction>
</comment>
<comment type="pathway">
    <text>Cell wall biogenesis; peptidoglycan biosynthesis.</text>
</comment>
<comment type="subcellular location">
    <subcellularLocation>
        <location evidence="3">Cell membrane</location>
        <topology evidence="4">Peripheral membrane protein</topology>
    </subcellularLocation>
</comment>
<comment type="developmental stage">
    <text evidence="3">Expressed during sporulation; strong expression 60-150 minutes after sporulation onset, falls to background expression by 240 minutes. Found only in mother cells.</text>
</comment>
<comment type="disruption phenotype">
    <text evidence="3">Asporogeneous; spore development starts but does not develop the spore cortex.</text>
</comment>
<comment type="similarity">
    <text evidence="4">Belongs to the transpeptidase family.</text>
</comment>
<gene>
    <name type="primary">spoVD</name>
    <name type="ordered locus">BSU15170</name>
</gene>
<feature type="chain" id="PRO_0000195466" description="Stage V sporulation protein D">
    <location>
        <begin position="1"/>
        <end position="646"/>
    </location>
</feature>
<feature type="domain" description="PASTA" evidence="2">
    <location>
        <begin position="580"/>
        <end position="638"/>
    </location>
</feature>
<feature type="active site" description="Acyl-ester intermediate" evidence="1">
    <location>
        <position position="294"/>
    </location>
</feature>
<feature type="sequence conflict" description="In Ref. 1; CAA81085." evidence="4" ref="1">
    <original>TIQFGGTVAA</original>
    <variation>AFSLAERWQ</variation>
    <location>
        <begin position="540"/>
        <end position="549"/>
    </location>
</feature>
<evidence type="ECO:0000250" key="1">
    <source>
        <dbReference type="UniProtKB" id="P0AD65"/>
    </source>
</evidence>
<evidence type="ECO:0000255" key="2">
    <source>
        <dbReference type="PROSITE-ProRule" id="PRU00528"/>
    </source>
</evidence>
<evidence type="ECO:0000269" key="3">
    <source>
    </source>
</evidence>
<evidence type="ECO:0000305" key="4"/>
<dbReference type="EC" id="3.4.16.4" evidence="4"/>
<dbReference type="EMBL" id="Z25865">
    <property type="protein sequence ID" value="CAA81085.1"/>
    <property type="molecule type" value="Genomic_DNA"/>
</dbReference>
<dbReference type="EMBL" id="AL009126">
    <property type="protein sequence ID" value="CAB13390.2"/>
    <property type="molecule type" value="Genomic_DNA"/>
</dbReference>
<dbReference type="EMBL" id="L09703">
    <property type="protein sequence ID" value="AAC36838.1"/>
    <property type="molecule type" value="Unassigned_DNA"/>
</dbReference>
<dbReference type="EMBL" id="Z15056">
    <property type="protein sequence ID" value="CAA78766.1"/>
    <property type="molecule type" value="Genomic_DNA"/>
</dbReference>
<dbReference type="EMBL" id="Z68230">
    <property type="protein sequence ID" value="CAA92528.1"/>
    <property type="molecule type" value="Genomic_DNA"/>
</dbReference>
<dbReference type="PIR" id="S49570">
    <property type="entry name" value="S49570"/>
</dbReference>
<dbReference type="RefSeq" id="NP_389400.2">
    <property type="nucleotide sequence ID" value="NC_000964.3"/>
</dbReference>
<dbReference type="RefSeq" id="WP_003245048.1">
    <property type="nucleotide sequence ID" value="NZ_OZ025638.1"/>
</dbReference>
<dbReference type="SMR" id="Q03524"/>
<dbReference type="FunCoup" id="Q03524">
    <property type="interactions" value="411"/>
</dbReference>
<dbReference type="STRING" id="224308.BSU15170"/>
<dbReference type="PaxDb" id="224308-BSU15170"/>
<dbReference type="EnsemblBacteria" id="CAB13390">
    <property type="protein sequence ID" value="CAB13390"/>
    <property type="gene ID" value="BSU_15170"/>
</dbReference>
<dbReference type="GeneID" id="936661"/>
<dbReference type="KEGG" id="bsu:BSU15170"/>
<dbReference type="PATRIC" id="fig|224308.179.peg.1653"/>
<dbReference type="eggNOG" id="COG0768">
    <property type="taxonomic scope" value="Bacteria"/>
</dbReference>
<dbReference type="InParanoid" id="Q03524"/>
<dbReference type="OrthoDB" id="9804124at2"/>
<dbReference type="PhylomeDB" id="Q03524"/>
<dbReference type="BioCyc" id="BSUB:BSU15170-MONOMER"/>
<dbReference type="UniPathway" id="UPA00219"/>
<dbReference type="Proteomes" id="UP000001570">
    <property type="component" value="Chromosome"/>
</dbReference>
<dbReference type="GO" id="GO:0005886">
    <property type="term" value="C:plasma membrane"/>
    <property type="evidence" value="ECO:0000318"/>
    <property type="project" value="GO_Central"/>
</dbReference>
<dbReference type="GO" id="GO:0008658">
    <property type="term" value="F:penicillin binding"/>
    <property type="evidence" value="ECO:0000318"/>
    <property type="project" value="GO_Central"/>
</dbReference>
<dbReference type="GO" id="GO:0009002">
    <property type="term" value="F:serine-type D-Ala-D-Ala carboxypeptidase activity"/>
    <property type="evidence" value="ECO:0007669"/>
    <property type="project" value="UniProtKB-EC"/>
</dbReference>
<dbReference type="GO" id="GO:0071555">
    <property type="term" value="P:cell wall organization"/>
    <property type="evidence" value="ECO:0000318"/>
    <property type="project" value="GO_Central"/>
</dbReference>
<dbReference type="GO" id="GO:0009252">
    <property type="term" value="P:peptidoglycan biosynthetic process"/>
    <property type="evidence" value="ECO:0007669"/>
    <property type="project" value="UniProtKB-UniPathway"/>
</dbReference>
<dbReference type="GO" id="GO:0006508">
    <property type="term" value="P:proteolysis"/>
    <property type="evidence" value="ECO:0007669"/>
    <property type="project" value="UniProtKB-KW"/>
</dbReference>
<dbReference type="GO" id="GO:0008360">
    <property type="term" value="P:regulation of cell shape"/>
    <property type="evidence" value="ECO:0007669"/>
    <property type="project" value="UniProtKB-KW"/>
</dbReference>
<dbReference type="GO" id="GO:0030435">
    <property type="term" value="P:sporulation resulting in formation of a cellular spore"/>
    <property type="evidence" value="ECO:0007669"/>
    <property type="project" value="UniProtKB-KW"/>
</dbReference>
<dbReference type="CDD" id="cd06573">
    <property type="entry name" value="PASTA"/>
    <property type="match status" value="1"/>
</dbReference>
<dbReference type="Gene3D" id="3.30.10.20">
    <property type="match status" value="1"/>
</dbReference>
<dbReference type="Gene3D" id="3.30.450.330">
    <property type="match status" value="1"/>
</dbReference>
<dbReference type="Gene3D" id="3.40.710.10">
    <property type="entry name" value="DD-peptidase/beta-lactamase superfamily"/>
    <property type="match status" value="1"/>
</dbReference>
<dbReference type="Gene3D" id="3.90.1310.10">
    <property type="entry name" value="Penicillin-binding protein 2a (Domain 2)"/>
    <property type="match status" value="1"/>
</dbReference>
<dbReference type="InterPro" id="IPR050515">
    <property type="entry name" value="Bact_Transpept/Beta-Lactamase"/>
</dbReference>
<dbReference type="InterPro" id="IPR012338">
    <property type="entry name" value="Beta-lactam/transpept-like"/>
</dbReference>
<dbReference type="InterPro" id="IPR005543">
    <property type="entry name" value="PASTA_dom"/>
</dbReference>
<dbReference type="InterPro" id="IPR005311">
    <property type="entry name" value="PBP_dimer"/>
</dbReference>
<dbReference type="InterPro" id="IPR036138">
    <property type="entry name" value="PBP_dimer_sf"/>
</dbReference>
<dbReference type="InterPro" id="IPR001460">
    <property type="entry name" value="PCN-bd_Tpept"/>
</dbReference>
<dbReference type="InterPro" id="IPR011927">
    <property type="entry name" value="SpoVD_pbp"/>
</dbReference>
<dbReference type="NCBIfam" id="TIGR02214">
    <property type="entry name" value="spoVD_pbp"/>
    <property type="match status" value="1"/>
</dbReference>
<dbReference type="PANTHER" id="PTHR30627">
    <property type="entry name" value="PEPTIDOGLYCAN D,D-TRANSPEPTIDASE"/>
    <property type="match status" value="1"/>
</dbReference>
<dbReference type="PANTHER" id="PTHR30627:SF1">
    <property type="entry name" value="PEPTIDOGLYCAN D,D-TRANSPEPTIDASE FTSI"/>
    <property type="match status" value="1"/>
</dbReference>
<dbReference type="Pfam" id="PF03793">
    <property type="entry name" value="PASTA"/>
    <property type="match status" value="1"/>
</dbReference>
<dbReference type="Pfam" id="PF03717">
    <property type="entry name" value="PBP_dimer"/>
    <property type="match status" value="1"/>
</dbReference>
<dbReference type="Pfam" id="PF00905">
    <property type="entry name" value="Transpeptidase"/>
    <property type="match status" value="1"/>
</dbReference>
<dbReference type="SMART" id="SM00740">
    <property type="entry name" value="PASTA"/>
    <property type="match status" value="1"/>
</dbReference>
<dbReference type="SUPFAM" id="SSF56601">
    <property type="entry name" value="beta-lactamase/transpeptidase-like"/>
    <property type="match status" value="1"/>
</dbReference>
<dbReference type="SUPFAM" id="SSF56519">
    <property type="entry name" value="Penicillin binding protein dimerisation domain"/>
    <property type="match status" value="1"/>
</dbReference>
<dbReference type="SUPFAM" id="SSF54184">
    <property type="entry name" value="Penicillin-binding protein 2x (pbp-2x), c-terminal domain"/>
    <property type="match status" value="1"/>
</dbReference>
<dbReference type="PROSITE" id="PS51178">
    <property type="entry name" value="PASTA"/>
    <property type="match status" value="1"/>
</dbReference>
<protein>
    <recommendedName>
        <fullName>Stage V sporulation protein D</fullName>
        <ecNumber evidence="4">3.4.16.4</ecNumber>
    </recommendedName>
    <alternativeName>
        <fullName>Sporulation-specific penicillin-binding protein</fullName>
    </alternativeName>
</protein>
<sequence length="646" mass="71118">MRVSNVTVRKRLLFVLLFGVIVFLIIDTRLGYVQFVMGEKLTSLAKDSWSRNLPFEPERGEILDRNGVKLATNKSAPTVFVVPRQVQNPMKTSKQLAAVLNMSEEKVYKHVTKKASIEKITPEGRKISNEKAKEIKALDLKGVYVAEDSIRHYPFGSFLSHVLGFAGIDNQGLLGLEAYYDDDLKGEKGSVKFYTDAKGKKMPDEADDYTPPKDGLDMKLTVDSKVQTIMERELDNAEAKYHPDGMIAVAMNPKNGEILGMSSRPDFDPADYQSVDPSVYNRNLPVWSTYEPGSTFKIITLAAALEEQKVNLKRDQFYDKGHAEVDGARLRCWKRGGHGLQTYLEVVQNSCNPGFVELGERLGKEKLFKYIKDFGFGQKTGIDLQGEGTGILFPLERVGPVEQATTAFGQGVSVTPIQQVAAVSAAVNGGTLYTPYIAKEWIDPVTKKTVKKQSPIAKKQVISEETSKQIRYALESVVAEGTGRNAFVEGYRVGGKTGTAQKVKDGKYLENNHIVSFIGFAPADDPSLVVYVAVDNPKGTIQFGGTVAAPIVGNIMRDSLPELGVKPRKNQIEKKYQWNDTKTIEVPNVVGMSVSDLESLLVNLNVDASGKGSKIVKQSPAAGTKVKEGSKIRVYLTEEDEKEAAD</sequence>
<reference key="1">
    <citation type="journal article" date="1994" name="J. Mol. Biol.">
        <title>The Bacillus subtilis spoVD gene encodes a mother-cell-specific penicillin-binding protein required for spore morphogenesis.</title>
        <authorList>
            <person name="Daniel R.A."/>
            <person name="Drake S."/>
            <person name="Buchanan C.E."/>
            <person name="Scholle R."/>
            <person name="Errington J."/>
        </authorList>
    </citation>
    <scope>NUCLEOTIDE SEQUENCE [GENOMIC DNA]</scope>
    <scope>FUNCTION</scope>
    <scope>SUBCELLULAR LOCATION</scope>
    <scope>DEVELOPMENTAL STAGE</scope>
    <scope>DISRUPTION PHENOTYPE</scope>
    <scope>PENICILLIN-BINDING</scope>
    <source>
        <strain>168</strain>
    </source>
</reference>
<reference key="2">
    <citation type="journal article" date="1997" name="Nature">
        <title>The complete genome sequence of the Gram-positive bacterium Bacillus subtilis.</title>
        <authorList>
            <person name="Kunst F."/>
            <person name="Ogasawara N."/>
            <person name="Moszer I."/>
            <person name="Albertini A.M."/>
            <person name="Alloni G."/>
            <person name="Azevedo V."/>
            <person name="Bertero M.G."/>
            <person name="Bessieres P."/>
            <person name="Bolotin A."/>
            <person name="Borchert S."/>
            <person name="Borriss R."/>
            <person name="Boursier L."/>
            <person name="Brans A."/>
            <person name="Braun M."/>
            <person name="Brignell S.C."/>
            <person name="Bron S."/>
            <person name="Brouillet S."/>
            <person name="Bruschi C.V."/>
            <person name="Caldwell B."/>
            <person name="Capuano V."/>
            <person name="Carter N.M."/>
            <person name="Choi S.-K."/>
            <person name="Codani J.-J."/>
            <person name="Connerton I.F."/>
            <person name="Cummings N.J."/>
            <person name="Daniel R.A."/>
            <person name="Denizot F."/>
            <person name="Devine K.M."/>
            <person name="Duesterhoeft A."/>
            <person name="Ehrlich S.D."/>
            <person name="Emmerson P.T."/>
            <person name="Entian K.-D."/>
            <person name="Errington J."/>
            <person name="Fabret C."/>
            <person name="Ferrari E."/>
            <person name="Foulger D."/>
            <person name="Fritz C."/>
            <person name="Fujita M."/>
            <person name="Fujita Y."/>
            <person name="Fuma S."/>
            <person name="Galizzi A."/>
            <person name="Galleron N."/>
            <person name="Ghim S.-Y."/>
            <person name="Glaser P."/>
            <person name="Goffeau A."/>
            <person name="Golightly E.J."/>
            <person name="Grandi G."/>
            <person name="Guiseppi G."/>
            <person name="Guy B.J."/>
            <person name="Haga K."/>
            <person name="Haiech J."/>
            <person name="Harwood C.R."/>
            <person name="Henaut A."/>
            <person name="Hilbert H."/>
            <person name="Holsappel S."/>
            <person name="Hosono S."/>
            <person name="Hullo M.-F."/>
            <person name="Itaya M."/>
            <person name="Jones L.-M."/>
            <person name="Joris B."/>
            <person name="Karamata D."/>
            <person name="Kasahara Y."/>
            <person name="Klaerr-Blanchard M."/>
            <person name="Klein C."/>
            <person name="Kobayashi Y."/>
            <person name="Koetter P."/>
            <person name="Koningstein G."/>
            <person name="Krogh S."/>
            <person name="Kumano M."/>
            <person name="Kurita K."/>
            <person name="Lapidus A."/>
            <person name="Lardinois S."/>
            <person name="Lauber J."/>
            <person name="Lazarevic V."/>
            <person name="Lee S.-M."/>
            <person name="Levine A."/>
            <person name="Liu H."/>
            <person name="Masuda S."/>
            <person name="Mauel C."/>
            <person name="Medigue C."/>
            <person name="Medina N."/>
            <person name="Mellado R.P."/>
            <person name="Mizuno M."/>
            <person name="Moestl D."/>
            <person name="Nakai S."/>
            <person name="Noback M."/>
            <person name="Noone D."/>
            <person name="O'Reilly M."/>
            <person name="Ogawa K."/>
            <person name="Ogiwara A."/>
            <person name="Oudega B."/>
            <person name="Park S.-H."/>
            <person name="Parro V."/>
            <person name="Pohl T.M."/>
            <person name="Portetelle D."/>
            <person name="Porwollik S."/>
            <person name="Prescott A.M."/>
            <person name="Presecan E."/>
            <person name="Pujic P."/>
            <person name="Purnelle B."/>
            <person name="Rapoport G."/>
            <person name="Rey M."/>
            <person name="Reynolds S."/>
            <person name="Rieger M."/>
            <person name="Rivolta C."/>
            <person name="Rocha E."/>
            <person name="Roche B."/>
            <person name="Rose M."/>
            <person name="Sadaie Y."/>
            <person name="Sato T."/>
            <person name="Scanlan E."/>
            <person name="Schleich S."/>
            <person name="Schroeter R."/>
            <person name="Scoffone F."/>
            <person name="Sekiguchi J."/>
            <person name="Sekowska A."/>
            <person name="Seror S.J."/>
            <person name="Serror P."/>
            <person name="Shin B.-S."/>
            <person name="Soldo B."/>
            <person name="Sorokin A."/>
            <person name="Tacconi E."/>
            <person name="Takagi T."/>
            <person name="Takahashi H."/>
            <person name="Takemaru K."/>
            <person name="Takeuchi M."/>
            <person name="Tamakoshi A."/>
            <person name="Tanaka T."/>
            <person name="Terpstra P."/>
            <person name="Tognoni A."/>
            <person name="Tosato V."/>
            <person name="Uchiyama S."/>
            <person name="Vandenbol M."/>
            <person name="Vannier F."/>
            <person name="Vassarotti A."/>
            <person name="Viari A."/>
            <person name="Wambutt R."/>
            <person name="Wedler E."/>
            <person name="Wedler H."/>
            <person name="Weitzenegger T."/>
            <person name="Winters P."/>
            <person name="Wipat A."/>
            <person name="Yamamoto H."/>
            <person name="Yamane K."/>
            <person name="Yasumoto K."/>
            <person name="Yata K."/>
            <person name="Yoshida K."/>
            <person name="Yoshikawa H.-F."/>
            <person name="Zumstein E."/>
            <person name="Yoshikawa H."/>
            <person name="Danchin A."/>
        </authorList>
    </citation>
    <scope>NUCLEOTIDE SEQUENCE [LARGE SCALE GENOMIC DNA]</scope>
    <source>
        <strain>168</strain>
    </source>
</reference>
<reference key="3">
    <citation type="journal article" date="2009" name="Microbiology">
        <title>From a consortium sequence to a unified sequence: the Bacillus subtilis 168 reference genome a decade later.</title>
        <authorList>
            <person name="Barbe V."/>
            <person name="Cruveiller S."/>
            <person name="Kunst F."/>
            <person name="Lenoble P."/>
            <person name="Meurice G."/>
            <person name="Sekowska A."/>
            <person name="Vallenet D."/>
            <person name="Wang T."/>
            <person name="Moszer I."/>
            <person name="Medigue C."/>
            <person name="Danchin A."/>
        </authorList>
    </citation>
    <scope>SEQUENCE REVISION TO 540-549</scope>
</reference>
<reference key="4">
    <citation type="journal article" date="1993" name="J. Bacteriol.">
        <title>Cloning and sequencing of the cell division gene pbpB, which encodes penicillin-binding protein 2B in Bacillus subtilis.</title>
        <authorList>
            <person name="Yanouri A."/>
            <person name="Daniel R.A."/>
            <person name="Errington J."/>
            <person name="Buchanan C.E."/>
        </authorList>
    </citation>
    <scope>NUCLEOTIDE SEQUENCE [GENOMIC DNA] OF 1-69</scope>
    <source>
        <strain>168</strain>
    </source>
</reference>
<reference key="5">
    <citation type="journal article" date="1993" name="J. Gen. Microbiol.">
        <title>DNA sequence of the murE-murD region of Bacillus subtilis 168.</title>
        <authorList>
            <person name="Daniel R.A."/>
            <person name="Errington J."/>
        </authorList>
    </citation>
    <scope>NUCLEOTIDE SEQUENCE [GENOMIC DNA] OF 596-646</scope>
    <source>
        <strain>168</strain>
    </source>
</reference>
<reference key="6">
    <citation type="journal article" date="1996" name="J. Bacteriol.">
        <title>A complex four-gene operon containing essential cell division gene pbpB in Bacillus subtilis.</title>
        <authorList>
            <person name="Daniel R.A."/>
            <person name="Williams A.M."/>
            <person name="Errington J."/>
        </authorList>
    </citation>
    <scope>NUCLEOTIDE SEQUENCE [GENOMIC DNA] OF 1-18</scope>
    <source>
        <strain>168</strain>
    </source>
</reference>
<accession>Q03524</accession>
<name>SP5D_BACSU</name>
<organism>
    <name type="scientific">Bacillus subtilis (strain 168)</name>
    <dbReference type="NCBI Taxonomy" id="224308"/>
    <lineage>
        <taxon>Bacteria</taxon>
        <taxon>Bacillati</taxon>
        <taxon>Bacillota</taxon>
        <taxon>Bacilli</taxon>
        <taxon>Bacillales</taxon>
        <taxon>Bacillaceae</taxon>
        <taxon>Bacillus</taxon>
    </lineage>
</organism>